<name>YRAN_ECOSM</name>
<gene>
    <name evidence="1" type="primary">yraN</name>
    <name type="ordered locus">EcSMS35_3443</name>
</gene>
<sequence>MATVPTRSGSPRQLTTKQTGDAWEAQARRWLEGKGLRFIAANVNERGGEIDLIMREGRTTVFVEVRYRRSALYGGAAASVTRSKQHKLLQTARLWLARHNGSFDTVDCRFDVVAFTGNEVEWIKDAFNDHS</sequence>
<dbReference type="EMBL" id="CP000970">
    <property type="protein sequence ID" value="ACB16361.1"/>
    <property type="molecule type" value="Genomic_DNA"/>
</dbReference>
<dbReference type="RefSeq" id="WP_000246837.1">
    <property type="nucleotide sequence ID" value="NC_010498.1"/>
</dbReference>
<dbReference type="SMR" id="B1LFP9"/>
<dbReference type="KEGG" id="ecm:EcSMS35_3443"/>
<dbReference type="HOGENOM" id="CLU_115353_1_0_6"/>
<dbReference type="Proteomes" id="UP000007011">
    <property type="component" value="Chromosome"/>
</dbReference>
<dbReference type="GO" id="GO:0003676">
    <property type="term" value="F:nucleic acid binding"/>
    <property type="evidence" value="ECO:0007669"/>
    <property type="project" value="InterPro"/>
</dbReference>
<dbReference type="CDD" id="cd20736">
    <property type="entry name" value="PoNe_Nuclease"/>
    <property type="match status" value="1"/>
</dbReference>
<dbReference type="Gene3D" id="3.40.1350.10">
    <property type="match status" value="1"/>
</dbReference>
<dbReference type="HAMAP" id="MF_00048">
    <property type="entry name" value="UPF0102"/>
    <property type="match status" value="1"/>
</dbReference>
<dbReference type="InterPro" id="IPR011335">
    <property type="entry name" value="Restrct_endonuc-II-like"/>
</dbReference>
<dbReference type="InterPro" id="IPR011856">
    <property type="entry name" value="tRNA_endonuc-like_dom_sf"/>
</dbReference>
<dbReference type="InterPro" id="IPR003509">
    <property type="entry name" value="UPF0102_YraN-like"/>
</dbReference>
<dbReference type="NCBIfam" id="NF009150">
    <property type="entry name" value="PRK12497.1-3"/>
    <property type="match status" value="1"/>
</dbReference>
<dbReference type="NCBIfam" id="TIGR00252">
    <property type="entry name" value="YraN family protein"/>
    <property type="match status" value="1"/>
</dbReference>
<dbReference type="PANTHER" id="PTHR34039">
    <property type="entry name" value="UPF0102 PROTEIN YRAN"/>
    <property type="match status" value="1"/>
</dbReference>
<dbReference type="PANTHER" id="PTHR34039:SF1">
    <property type="entry name" value="UPF0102 PROTEIN YRAN"/>
    <property type="match status" value="1"/>
</dbReference>
<dbReference type="Pfam" id="PF02021">
    <property type="entry name" value="UPF0102"/>
    <property type="match status" value="1"/>
</dbReference>
<dbReference type="SUPFAM" id="SSF52980">
    <property type="entry name" value="Restriction endonuclease-like"/>
    <property type="match status" value="1"/>
</dbReference>
<proteinExistence type="inferred from homology"/>
<feature type="chain" id="PRO_1000200139" description="UPF0102 protein YraN">
    <location>
        <begin position="1"/>
        <end position="131"/>
    </location>
</feature>
<feature type="region of interest" description="Disordered" evidence="2">
    <location>
        <begin position="1"/>
        <end position="21"/>
    </location>
</feature>
<feature type="compositionally biased region" description="Polar residues" evidence="2">
    <location>
        <begin position="1"/>
        <end position="19"/>
    </location>
</feature>
<reference key="1">
    <citation type="journal article" date="2008" name="J. Bacteriol.">
        <title>Insights into the environmental resistance gene pool from the genome sequence of the multidrug-resistant environmental isolate Escherichia coli SMS-3-5.</title>
        <authorList>
            <person name="Fricke W.F."/>
            <person name="Wright M.S."/>
            <person name="Lindell A.H."/>
            <person name="Harkins D.M."/>
            <person name="Baker-Austin C."/>
            <person name="Ravel J."/>
            <person name="Stepanauskas R."/>
        </authorList>
    </citation>
    <scope>NUCLEOTIDE SEQUENCE [LARGE SCALE GENOMIC DNA]</scope>
    <source>
        <strain>SMS-3-5 / SECEC</strain>
    </source>
</reference>
<comment type="similarity">
    <text evidence="1">Belongs to the UPF0102 family.</text>
</comment>
<organism>
    <name type="scientific">Escherichia coli (strain SMS-3-5 / SECEC)</name>
    <dbReference type="NCBI Taxonomy" id="439855"/>
    <lineage>
        <taxon>Bacteria</taxon>
        <taxon>Pseudomonadati</taxon>
        <taxon>Pseudomonadota</taxon>
        <taxon>Gammaproteobacteria</taxon>
        <taxon>Enterobacterales</taxon>
        <taxon>Enterobacteriaceae</taxon>
        <taxon>Escherichia</taxon>
    </lineage>
</organism>
<evidence type="ECO:0000255" key="1">
    <source>
        <dbReference type="HAMAP-Rule" id="MF_00048"/>
    </source>
</evidence>
<evidence type="ECO:0000256" key="2">
    <source>
        <dbReference type="SAM" id="MobiDB-lite"/>
    </source>
</evidence>
<protein>
    <recommendedName>
        <fullName evidence="1">UPF0102 protein YraN</fullName>
    </recommendedName>
</protein>
<accession>B1LFP9</accession>